<evidence type="ECO:0000255" key="1">
    <source>
        <dbReference type="HAMAP-Rule" id="MF_00206"/>
    </source>
</evidence>
<evidence type="ECO:0000255" key="2">
    <source>
        <dbReference type="PROSITE-ProRule" id="PRU01266"/>
    </source>
</evidence>
<reference key="1">
    <citation type="journal article" date="2011" name="Proc. Natl. Acad. Sci. U.S.A.">
        <title>Genomic anatomy of Escherichia coli O157:H7 outbreaks.</title>
        <authorList>
            <person name="Eppinger M."/>
            <person name="Mammel M.K."/>
            <person name="Leclerc J.E."/>
            <person name="Ravel J."/>
            <person name="Cebula T.A."/>
        </authorList>
    </citation>
    <scope>NUCLEOTIDE SEQUENCE [LARGE SCALE GENOMIC DNA]</scope>
    <source>
        <strain>EC4115 / EHEC</strain>
    </source>
</reference>
<feature type="chain" id="PRO_1000099601" description="Lipoyl synthase">
    <location>
        <begin position="1"/>
        <end position="321"/>
    </location>
</feature>
<feature type="domain" description="Radical SAM core" evidence="2">
    <location>
        <begin position="80"/>
        <end position="297"/>
    </location>
</feature>
<feature type="binding site" evidence="1">
    <location>
        <position position="68"/>
    </location>
    <ligand>
        <name>[4Fe-4S] cluster</name>
        <dbReference type="ChEBI" id="CHEBI:49883"/>
        <label>1</label>
    </ligand>
</feature>
<feature type="binding site" evidence="1">
    <location>
        <position position="73"/>
    </location>
    <ligand>
        <name>[4Fe-4S] cluster</name>
        <dbReference type="ChEBI" id="CHEBI:49883"/>
        <label>1</label>
    </ligand>
</feature>
<feature type="binding site" evidence="1">
    <location>
        <position position="79"/>
    </location>
    <ligand>
        <name>[4Fe-4S] cluster</name>
        <dbReference type="ChEBI" id="CHEBI:49883"/>
        <label>1</label>
    </ligand>
</feature>
<feature type="binding site" evidence="1">
    <location>
        <position position="94"/>
    </location>
    <ligand>
        <name>[4Fe-4S] cluster</name>
        <dbReference type="ChEBI" id="CHEBI:49883"/>
        <label>2</label>
        <note>4Fe-4S-S-AdoMet</note>
    </ligand>
</feature>
<feature type="binding site" evidence="1">
    <location>
        <position position="98"/>
    </location>
    <ligand>
        <name>[4Fe-4S] cluster</name>
        <dbReference type="ChEBI" id="CHEBI:49883"/>
        <label>2</label>
        <note>4Fe-4S-S-AdoMet</note>
    </ligand>
</feature>
<feature type="binding site" evidence="1">
    <location>
        <position position="101"/>
    </location>
    <ligand>
        <name>[4Fe-4S] cluster</name>
        <dbReference type="ChEBI" id="CHEBI:49883"/>
        <label>2</label>
        <note>4Fe-4S-S-AdoMet</note>
    </ligand>
</feature>
<feature type="binding site" evidence="1">
    <location>
        <position position="308"/>
    </location>
    <ligand>
        <name>[4Fe-4S] cluster</name>
        <dbReference type="ChEBI" id="CHEBI:49883"/>
        <label>1</label>
    </ligand>
</feature>
<comment type="function">
    <text evidence="1">Catalyzes the radical-mediated insertion of two sulfur atoms into the C-6 and C-8 positions of the octanoyl moiety bound to the lipoyl domains of lipoate-dependent enzymes, thereby converting the octanoylated domains into lipoylated derivatives.</text>
</comment>
<comment type="catalytic activity">
    <reaction evidence="1">
        <text>[[Fe-S] cluster scaffold protein carrying a second [4Fe-4S](2+) cluster] + N(6)-octanoyl-L-lysyl-[protein] + 2 oxidized [2Fe-2S]-[ferredoxin] + 2 S-adenosyl-L-methionine + 4 H(+) = [[Fe-S] cluster scaffold protein] + N(6)-[(R)-dihydrolipoyl]-L-lysyl-[protein] + 4 Fe(3+) + 2 hydrogen sulfide + 2 5'-deoxyadenosine + 2 L-methionine + 2 reduced [2Fe-2S]-[ferredoxin]</text>
        <dbReference type="Rhea" id="RHEA:16585"/>
        <dbReference type="Rhea" id="RHEA-COMP:9928"/>
        <dbReference type="Rhea" id="RHEA-COMP:10000"/>
        <dbReference type="Rhea" id="RHEA-COMP:10001"/>
        <dbReference type="Rhea" id="RHEA-COMP:10475"/>
        <dbReference type="Rhea" id="RHEA-COMP:14568"/>
        <dbReference type="Rhea" id="RHEA-COMP:14569"/>
        <dbReference type="ChEBI" id="CHEBI:15378"/>
        <dbReference type="ChEBI" id="CHEBI:17319"/>
        <dbReference type="ChEBI" id="CHEBI:29034"/>
        <dbReference type="ChEBI" id="CHEBI:29919"/>
        <dbReference type="ChEBI" id="CHEBI:33722"/>
        <dbReference type="ChEBI" id="CHEBI:33737"/>
        <dbReference type="ChEBI" id="CHEBI:33738"/>
        <dbReference type="ChEBI" id="CHEBI:57844"/>
        <dbReference type="ChEBI" id="CHEBI:59789"/>
        <dbReference type="ChEBI" id="CHEBI:78809"/>
        <dbReference type="ChEBI" id="CHEBI:83100"/>
        <dbReference type="EC" id="2.8.1.8"/>
    </reaction>
</comment>
<comment type="cofactor">
    <cofactor evidence="1">
        <name>[4Fe-4S] cluster</name>
        <dbReference type="ChEBI" id="CHEBI:49883"/>
    </cofactor>
    <text evidence="1">Binds 2 [4Fe-4S] clusters per subunit. One cluster is coordinated with 3 cysteines and an exchangeable S-adenosyl-L-methionine.</text>
</comment>
<comment type="pathway">
    <text evidence="1">Protein modification; protein lipoylation via endogenous pathway; protein N(6)-(lipoyl)lysine from octanoyl-[acyl-carrier-protein]: step 2/2.</text>
</comment>
<comment type="subcellular location">
    <subcellularLocation>
        <location evidence="1">Cytoplasm</location>
    </subcellularLocation>
</comment>
<comment type="similarity">
    <text evidence="1">Belongs to the radical SAM superfamily. Lipoyl synthase family.</text>
</comment>
<sequence>MSKPIVMERGVKYRDADKMALIPVKNVATEREALLRKPEWMKIKLPADSTRIQGIKAAMRKNGLHSVCEEASCPNLAECFNHGTATFMILGAICTRRCPFCDVAHGRPVAPDANEPVKLAQTIADMALRYVVITSVDRDDLRDGGAQHFADCITAIREKSPQIKIETLVPDFRGRMDRALDILTATPPDVFNHNLENVPRIYRQVRPGADYNWSLKLLERFKEAHPEIPTKSGLMVGLGETNEEIIEVMRDLRRHGVTMLTLGQYLQPSRHHLPVQRYVSPDEFDEMKAEALAMGFTHAACGPFVRSSYHADLQAKGMEVK</sequence>
<gene>
    <name evidence="1" type="primary">lipA</name>
    <name type="ordered locus">ECH74115_0716</name>
</gene>
<name>LIPA_ECO5E</name>
<keyword id="KW-0004">4Fe-4S</keyword>
<keyword id="KW-0963">Cytoplasm</keyword>
<keyword id="KW-0408">Iron</keyword>
<keyword id="KW-0411">Iron-sulfur</keyword>
<keyword id="KW-0479">Metal-binding</keyword>
<keyword id="KW-0949">S-adenosyl-L-methionine</keyword>
<keyword id="KW-0808">Transferase</keyword>
<dbReference type="EC" id="2.8.1.8" evidence="1"/>
<dbReference type="EMBL" id="CP001164">
    <property type="protein sequence ID" value="ACI37996.1"/>
    <property type="molecule type" value="Genomic_DNA"/>
</dbReference>
<dbReference type="RefSeq" id="WP_000042632.1">
    <property type="nucleotide sequence ID" value="NC_011353.1"/>
</dbReference>
<dbReference type="SMR" id="B5YQH9"/>
<dbReference type="GeneID" id="93776854"/>
<dbReference type="KEGG" id="ecf:ECH74115_0716"/>
<dbReference type="HOGENOM" id="CLU_033144_2_1_6"/>
<dbReference type="UniPathway" id="UPA00538">
    <property type="reaction ID" value="UER00593"/>
</dbReference>
<dbReference type="GO" id="GO:0005737">
    <property type="term" value="C:cytoplasm"/>
    <property type="evidence" value="ECO:0007669"/>
    <property type="project" value="UniProtKB-SubCell"/>
</dbReference>
<dbReference type="GO" id="GO:0051539">
    <property type="term" value="F:4 iron, 4 sulfur cluster binding"/>
    <property type="evidence" value="ECO:0007669"/>
    <property type="project" value="UniProtKB-UniRule"/>
</dbReference>
<dbReference type="GO" id="GO:0016992">
    <property type="term" value="F:lipoate synthase activity"/>
    <property type="evidence" value="ECO:0007669"/>
    <property type="project" value="UniProtKB-UniRule"/>
</dbReference>
<dbReference type="GO" id="GO:0046872">
    <property type="term" value="F:metal ion binding"/>
    <property type="evidence" value="ECO:0007669"/>
    <property type="project" value="UniProtKB-KW"/>
</dbReference>
<dbReference type="CDD" id="cd01335">
    <property type="entry name" value="Radical_SAM"/>
    <property type="match status" value="1"/>
</dbReference>
<dbReference type="FunFam" id="3.20.20.70:FF:000023">
    <property type="entry name" value="Lipoyl synthase"/>
    <property type="match status" value="1"/>
</dbReference>
<dbReference type="Gene3D" id="3.20.20.70">
    <property type="entry name" value="Aldolase class I"/>
    <property type="match status" value="1"/>
</dbReference>
<dbReference type="HAMAP" id="MF_00206">
    <property type="entry name" value="Lipoyl_synth"/>
    <property type="match status" value="1"/>
</dbReference>
<dbReference type="InterPro" id="IPR013785">
    <property type="entry name" value="Aldolase_TIM"/>
</dbReference>
<dbReference type="InterPro" id="IPR006638">
    <property type="entry name" value="Elp3/MiaA/NifB-like_rSAM"/>
</dbReference>
<dbReference type="InterPro" id="IPR031691">
    <property type="entry name" value="LIAS_N"/>
</dbReference>
<dbReference type="InterPro" id="IPR003698">
    <property type="entry name" value="Lipoyl_synth"/>
</dbReference>
<dbReference type="InterPro" id="IPR007197">
    <property type="entry name" value="rSAM"/>
</dbReference>
<dbReference type="NCBIfam" id="TIGR00510">
    <property type="entry name" value="lipA"/>
    <property type="match status" value="1"/>
</dbReference>
<dbReference type="NCBIfam" id="NF004019">
    <property type="entry name" value="PRK05481.1"/>
    <property type="match status" value="1"/>
</dbReference>
<dbReference type="NCBIfam" id="NF009544">
    <property type="entry name" value="PRK12928.1"/>
    <property type="match status" value="1"/>
</dbReference>
<dbReference type="PANTHER" id="PTHR10949">
    <property type="entry name" value="LIPOYL SYNTHASE"/>
    <property type="match status" value="1"/>
</dbReference>
<dbReference type="PANTHER" id="PTHR10949:SF0">
    <property type="entry name" value="LIPOYL SYNTHASE, MITOCHONDRIAL"/>
    <property type="match status" value="1"/>
</dbReference>
<dbReference type="Pfam" id="PF16881">
    <property type="entry name" value="LIAS_N"/>
    <property type="match status" value="1"/>
</dbReference>
<dbReference type="Pfam" id="PF04055">
    <property type="entry name" value="Radical_SAM"/>
    <property type="match status" value="1"/>
</dbReference>
<dbReference type="PIRSF" id="PIRSF005963">
    <property type="entry name" value="Lipoyl_synth"/>
    <property type="match status" value="1"/>
</dbReference>
<dbReference type="SFLD" id="SFLDF00271">
    <property type="entry name" value="lipoyl_synthase"/>
    <property type="match status" value="1"/>
</dbReference>
<dbReference type="SFLD" id="SFLDG01058">
    <property type="entry name" value="lipoyl_synthase_like"/>
    <property type="match status" value="1"/>
</dbReference>
<dbReference type="SMART" id="SM00729">
    <property type="entry name" value="Elp3"/>
    <property type="match status" value="1"/>
</dbReference>
<dbReference type="SUPFAM" id="SSF102114">
    <property type="entry name" value="Radical SAM enzymes"/>
    <property type="match status" value="1"/>
</dbReference>
<dbReference type="PROSITE" id="PS51918">
    <property type="entry name" value="RADICAL_SAM"/>
    <property type="match status" value="1"/>
</dbReference>
<protein>
    <recommendedName>
        <fullName evidence="1">Lipoyl synthase</fullName>
        <ecNumber evidence="1">2.8.1.8</ecNumber>
    </recommendedName>
    <alternativeName>
        <fullName evidence="1">Lip-syn</fullName>
        <shortName evidence="1">LS</shortName>
    </alternativeName>
    <alternativeName>
        <fullName evidence="1">Lipoate synthase</fullName>
    </alternativeName>
    <alternativeName>
        <fullName evidence="1">Lipoic acid synthase</fullName>
    </alternativeName>
    <alternativeName>
        <fullName evidence="1">Sulfur insertion protein LipA</fullName>
    </alternativeName>
</protein>
<organism>
    <name type="scientific">Escherichia coli O157:H7 (strain EC4115 / EHEC)</name>
    <dbReference type="NCBI Taxonomy" id="444450"/>
    <lineage>
        <taxon>Bacteria</taxon>
        <taxon>Pseudomonadati</taxon>
        <taxon>Pseudomonadota</taxon>
        <taxon>Gammaproteobacteria</taxon>
        <taxon>Enterobacterales</taxon>
        <taxon>Enterobacteriaceae</taxon>
        <taxon>Escherichia</taxon>
    </lineage>
</organism>
<proteinExistence type="inferred from homology"/>
<accession>B5YQH9</accession>